<keyword id="KW-0378">Hydrolase</keyword>
<keyword id="KW-0479">Metal-binding</keyword>
<keyword id="KW-0482">Metalloprotease</keyword>
<keyword id="KW-0645">Protease</keyword>
<keyword id="KW-0862">Zinc</keyword>
<accession>P94876</accession>
<proteinExistence type="inferred from homology"/>
<comment type="function">
    <text>Hydrolyzes peptides containing between 7 and 17 amino acids with a rather wide specificity.</text>
</comment>
<comment type="cofactor">
    <cofactor evidence="1">
        <name>Zn(2+)</name>
        <dbReference type="ChEBI" id="CHEBI:29105"/>
    </cofactor>
    <text evidence="1">Binds 1 zinc ion.</text>
</comment>
<comment type="similarity">
    <text evidence="3">Belongs to the peptidase M3B family.</text>
</comment>
<organism>
    <name type="scientific">Lactococcus lactis subsp. cremoris</name>
    <name type="common">Streptococcus cremoris</name>
    <dbReference type="NCBI Taxonomy" id="1359"/>
    <lineage>
        <taxon>Bacteria</taxon>
        <taxon>Bacillati</taxon>
        <taxon>Bacillota</taxon>
        <taxon>Bacilli</taxon>
        <taxon>Lactobacillales</taxon>
        <taxon>Streptococcaceae</taxon>
        <taxon>Lactococcus</taxon>
    </lineage>
</organism>
<sequence length="602" mass="69991">MVKNRNEIPEALTWDLTTIFSTDQKWETELEKVKKELSLVETNDKGHLLDSAETLLTITKNMLSISQKVEKLYVYASMKNDQDTREAKYQDYQSKATALYVNFGESYAFYEPEFLKNLQKETYGKWLETLQELKNYDHMFERLFAKKEHILSQKEGKILAAPGEIFESPSETFEIFDNADVKFPFVKNELGEKIQLTHGNYGSLMESENREVRKAAYEALYSNYEQCQHTYAKTLQTNVKVHNFNAQIRAYDSARQAALMSNFVPEKVYDVLIEGIHQHLPLLHRYIELRKKILEISDFKMYDIYTPLSNLDYKFNYTEGVKKAQEVLAIFGEEYSQKVKAAFDERWIDVEENVGKRSGAYSGGSYDTKAFMLLNWQGTLDDLFTLVHEMGHSIHSTFTRENQPYVYGDYPIFLAEIASTTNENILTETLLKESNDEKERFALLNHWLDSFRGTVFRQSQFAEFEQKIHEVDAEGEVLTSEFLNSLYGELNEKYYGLSAKENPEIQFEWAKIPHFYYNFYVFQYATGFSAASFIAEKVVHGSVTDRQNYLDYLKAGSSAYPLDVIAKAGVNMESTDYLESAFKLFEKRLNELEKLVEKGVHL</sequence>
<feature type="chain" id="PRO_0000078164" description="Oligoendopeptidase F, chromosomal">
    <location>
        <begin position="1"/>
        <end position="602"/>
    </location>
</feature>
<feature type="active site" evidence="2">
    <location>
        <position position="389"/>
    </location>
</feature>
<feature type="binding site" evidence="2">
    <location>
        <position position="388"/>
    </location>
    <ligand>
        <name>Zn(2+)</name>
        <dbReference type="ChEBI" id="CHEBI:29105"/>
        <note>catalytic</note>
    </ligand>
</feature>
<feature type="binding site" evidence="2">
    <location>
        <position position="392"/>
    </location>
    <ligand>
        <name>Zn(2+)</name>
        <dbReference type="ChEBI" id="CHEBI:29105"/>
        <note>catalytic</note>
    </ligand>
</feature>
<feature type="binding site" evidence="2">
    <location>
        <position position="395"/>
    </location>
    <ligand>
        <name>Zn(2+)</name>
        <dbReference type="ChEBI" id="CHEBI:29105"/>
        <note>catalytic</note>
    </ligand>
</feature>
<protein>
    <recommendedName>
        <fullName>Oligoendopeptidase F, chromosomal</fullName>
        <ecNumber>3.4.24.-</ecNumber>
    </recommendedName>
</protein>
<dbReference type="EC" id="3.4.24.-"/>
<dbReference type="EMBL" id="X99710">
    <property type="protein sequence ID" value="CAA68044.1"/>
    <property type="molecule type" value="Genomic_DNA"/>
</dbReference>
<dbReference type="SMR" id="P94876"/>
<dbReference type="MEROPS" id="M03.007"/>
<dbReference type="GO" id="GO:0046872">
    <property type="term" value="F:metal ion binding"/>
    <property type="evidence" value="ECO:0007669"/>
    <property type="project" value="UniProtKB-KW"/>
</dbReference>
<dbReference type="GO" id="GO:0004222">
    <property type="term" value="F:metalloendopeptidase activity"/>
    <property type="evidence" value="ECO:0007669"/>
    <property type="project" value="InterPro"/>
</dbReference>
<dbReference type="GO" id="GO:0006518">
    <property type="term" value="P:peptide metabolic process"/>
    <property type="evidence" value="ECO:0007669"/>
    <property type="project" value="TreeGrafter"/>
</dbReference>
<dbReference type="GO" id="GO:0006508">
    <property type="term" value="P:proteolysis"/>
    <property type="evidence" value="ECO:0007669"/>
    <property type="project" value="UniProtKB-KW"/>
</dbReference>
<dbReference type="CDD" id="cd09608">
    <property type="entry name" value="M3B_PepF"/>
    <property type="match status" value="1"/>
</dbReference>
<dbReference type="Gene3D" id="1.10.1370.20">
    <property type="entry name" value="Oligoendopeptidase f, C-terminal domain"/>
    <property type="match status" value="1"/>
</dbReference>
<dbReference type="Gene3D" id="1.20.140.70">
    <property type="entry name" value="Oligopeptidase f, N-terminal domain"/>
    <property type="match status" value="1"/>
</dbReference>
<dbReference type="Gene3D" id="1.10.287.830">
    <property type="entry name" value="putative peptidase helix hairpin domain like"/>
    <property type="match status" value="1"/>
</dbReference>
<dbReference type="InterPro" id="IPR013647">
    <property type="entry name" value="OligopepF_N_dom"/>
</dbReference>
<dbReference type="InterPro" id="IPR042088">
    <property type="entry name" value="OligoPept_F_C"/>
</dbReference>
<dbReference type="InterPro" id="IPR045090">
    <property type="entry name" value="Pept_M3A_M3B"/>
</dbReference>
<dbReference type="InterPro" id="IPR001567">
    <property type="entry name" value="Pept_M3A_M3B_dom"/>
</dbReference>
<dbReference type="InterPro" id="IPR004438">
    <property type="entry name" value="Peptidase_M3B"/>
</dbReference>
<dbReference type="NCBIfam" id="TIGR00181">
    <property type="entry name" value="pepF"/>
    <property type="match status" value="1"/>
</dbReference>
<dbReference type="PANTHER" id="PTHR11804">
    <property type="entry name" value="PROTEASE M3 THIMET OLIGOPEPTIDASE-RELATED"/>
    <property type="match status" value="1"/>
</dbReference>
<dbReference type="PANTHER" id="PTHR11804:SF84">
    <property type="entry name" value="SACCHAROLYSIN"/>
    <property type="match status" value="1"/>
</dbReference>
<dbReference type="Pfam" id="PF01432">
    <property type="entry name" value="Peptidase_M3"/>
    <property type="match status" value="1"/>
</dbReference>
<dbReference type="Pfam" id="PF08439">
    <property type="entry name" value="Peptidase_M3_N"/>
    <property type="match status" value="1"/>
</dbReference>
<dbReference type="SUPFAM" id="SSF55486">
    <property type="entry name" value="Metalloproteases ('zincins'), catalytic domain"/>
    <property type="match status" value="1"/>
</dbReference>
<dbReference type="PROSITE" id="PS00142">
    <property type="entry name" value="ZINC_PROTEASE"/>
    <property type="match status" value="1"/>
</dbReference>
<evidence type="ECO:0000250" key="1"/>
<evidence type="ECO:0000255" key="2">
    <source>
        <dbReference type="PROSITE-ProRule" id="PRU10095"/>
    </source>
</evidence>
<evidence type="ECO:0000305" key="3"/>
<reference key="1">
    <citation type="journal article" date="1997" name="J. Bacteriol.">
        <title>Duplication of the pepF gene and shuffling of DNA fragments on the lactose plasmid of Lactococcus lactis.</title>
        <authorList>
            <person name="Nardi M."/>
            <person name="Renault P."/>
            <person name="Monnet V."/>
        </authorList>
    </citation>
    <scope>NUCLEOTIDE SEQUENCE [GENOMIC DNA]</scope>
    <source>
        <strain>NCDO 763 / ML3</strain>
    </source>
</reference>
<gene>
    <name type="primary">pepF2</name>
</gene>
<name>PEPF2_LACLC</name>